<proteinExistence type="inferred from homology"/>
<evidence type="ECO:0000255" key="1">
    <source>
        <dbReference type="HAMAP-Rule" id="MF_01274"/>
    </source>
</evidence>
<gene>
    <name evidence="1" type="primary">coaX</name>
    <name type="synonym">baf</name>
    <name type="ordered locus">BB0160</name>
    <name type="ORF">BbLPS1.36c</name>
</gene>
<reference key="1">
    <citation type="journal article" date="2003" name="Nat. Genet.">
        <title>Comparative analysis of the genome sequences of Bordetella pertussis, Bordetella parapertussis and Bordetella bronchiseptica.</title>
        <authorList>
            <person name="Parkhill J."/>
            <person name="Sebaihia M."/>
            <person name="Preston A."/>
            <person name="Murphy L.D."/>
            <person name="Thomson N.R."/>
            <person name="Harris D.E."/>
            <person name="Holden M.T.G."/>
            <person name="Churcher C.M."/>
            <person name="Bentley S.D."/>
            <person name="Mungall K.L."/>
            <person name="Cerdeno-Tarraga A.-M."/>
            <person name="Temple L."/>
            <person name="James K.D."/>
            <person name="Harris B."/>
            <person name="Quail M.A."/>
            <person name="Achtman M."/>
            <person name="Atkin R."/>
            <person name="Baker S."/>
            <person name="Basham D."/>
            <person name="Bason N."/>
            <person name="Cherevach I."/>
            <person name="Chillingworth T."/>
            <person name="Collins M."/>
            <person name="Cronin A."/>
            <person name="Davis P."/>
            <person name="Doggett J."/>
            <person name="Feltwell T."/>
            <person name="Goble A."/>
            <person name="Hamlin N."/>
            <person name="Hauser H."/>
            <person name="Holroyd S."/>
            <person name="Jagels K."/>
            <person name="Leather S."/>
            <person name="Moule S."/>
            <person name="Norberczak H."/>
            <person name="O'Neil S."/>
            <person name="Ormond D."/>
            <person name="Price C."/>
            <person name="Rabbinowitsch E."/>
            <person name="Rutter S."/>
            <person name="Sanders M."/>
            <person name="Saunders D."/>
            <person name="Seeger K."/>
            <person name="Sharp S."/>
            <person name="Simmonds M."/>
            <person name="Skelton J."/>
            <person name="Squares R."/>
            <person name="Squares S."/>
            <person name="Stevens K."/>
            <person name="Unwin L."/>
            <person name="Whitehead S."/>
            <person name="Barrell B.G."/>
            <person name="Maskell D.J."/>
        </authorList>
    </citation>
    <scope>NUCLEOTIDE SEQUENCE [LARGE SCALE GENOMIC DNA]</scope>
    <source>
        <strain>ATCC BAA-588 / NCTC 13252 / RB50</strain>
    </source>
</reference>
<reference key="2">
    <citation type="journal article" date="1999" name="Infect. Immun.">
        <title>Genetic basis for lipopolysaccharide O-antigen biosynthesis in bordetellae.</title>
        <authorList>
            <person name="Preston A."/>
            <person name="Allen A.G."/>
            <person name="Cadisch J."/>
            <person name="Thomas R."/>
            <person name="Stevens K."/>
            <person name="Churcher C.M."/>
            <person name="Badcock K.L."/>
            <person name="Parkhill J."/>
            <person name="Barrell B."/>
            <person name="Maskell D.J."/>
        </authorList>
    </citation>
    <scope>NUCLEOTIDE SEQUENCE [GENOMIC DNA] OF 214-267</scope>
    <source>
        <strain>CN7635E</strain>
    </source>
</reference>
<protein>
    <recommendedName>
        <fullName evidence="1">Type III pantothenate kinase</fullName>
        <ecNumber evidence="1">2.7.1.33</ecNumber>
    </recommendedName>
    <alternativeName>
        <fullName>Bvg accessory factor</fullName>
    </alternativeName>
    <alternativeName>
        <fullName evidence="1">PanK-III</fullName>
    </alternativeName>
    <alternativeName>
        <fullName evidence="1">Pantothenic acid kinase</fullName>
    </alternativeName>
</protein>
<accession>O88005</accession>
<dbReference type="EC" id="2.7.1.33" evidence="1"/>
<dbReference type="EMBL" id="BX640437">
    <property type="protein sequence ID" value="CAE30661.1"/>
    <property type="molecule type" value="Genomic_DNA"/>
</dbReference>
<dbReference type="EMBL" id="AJ007747">
    <property type="protein sequence ID" value="CAA07675.1"/>
    <property type="molecule type" value="Genomic_DNA"/>
</dbReference>
<dbReference type="RefSeq" id="WP_003807125.1">
    <property type="nucleotide sequence ID" value="NC_002927.3"/>
</dbReference>
<dbReference type="SMR" id="O88005"/>
<dbReference type="KEGG" id="bbr:BB0160"/>
<dbReference type="eggNOG" id="COG1521">
    <property type="taxonomic scope" value="Bacteria"/>
</dbReference>
<dbReference type="HOGENOM" id="CLU_066627_0_0_4"/>
<dbReference type="UniPathway" id="UPA00241">
    <property type="reaction ID" value="UER00352"/>
</dbReference>
<dbReference type="Proteomes" id="UP000001027">
    <property type="component" value="Chromosome"/>
</dbReference>
<dbReference type="GO" id="GO:0005737">
    <property type="term" value="C:cytoplasm"/>
    <property type="evidence" value="ECO:0007669"/>
    <property type="project" value="UniProtKB-SubCell"/>
</dbReference>
<dbReference type="GO" id="GO:0005524">
    <property type="term" value="F:ATP binding"/>
    <property type="evidence" value="ECO:0007669"/>
    <property type="project" value="UniProtKB-UniRule"/>
</dbReference>
<dbReference type="GO" id="GO:0004594">
    <property type="term" value="F:pantothenate kinase activity"/>
    <property type="evidence" value="ECO:0007669"/>
    <property type="project" value="UniProtKB-UniRule"/>
</dbReference>
<dbReference type="GO" id="GO:0015937">
    <property type="term" value="P:coenzyme A biosynthetic process"/>
    <property type="evidence" value="ECO:0007669"/>
    <property type="project" value="UniProtKB-UniRule"/>
</dbReference>
<dbReference type="CDD" id="cd24015">
    <property type="entry name" value="ASKHA_NBD_PanK-III"/>
    <property type="match status" value="1"/>
</dbReference>
<dbReference type="Gene3D" id="3.30.420.40">
    <property type="match status" value="2"/>
</dbReference>
<dbReference type="HAMAP" id="MF_01274">
    <property type="entry name" value="Pantothen_kinase_3"/>
    <property type="match status" value="1"/>
</dbReference>
<dbReference type="InterPro" id="IPR043129">
    <property type="entry name" value="ATPase_NBD"/>
</dbReference>
<dbReference type="InterPro" id="IPR004619">
    <property type="entry name" value="Type_III_PanK"/>
</dbReference>
<dbReference type="NCBIfam" id="NF009869">
    <property type="entry name" value="PRK13328.1-5"/>
    <property type="match status" value="1"/>
</dbReference>
<dbReference type="PANTHER" id="PTHR34265">
    <property type="entry name" value="TYPE III PANTOTHENATE KINASE"/>
    <property type="match status" value="1"/>
</dbReference>
<dbReference type="PANTHER" id="PTHR34265:SF1">
    <property type="entry name" value="TYPE III PANTOTHENATE KINASE"/>
    <property type="match status" value="1"/>
</dbReference>
<dbReference type="Pfam" id="PF03309">
    <property type="entry name" value="Pan_kinase"/>
    <property type="match status" value="1"/>
</dbReference>
<dbReference type="SUPFAM" id="SSF53067">
    <property type="entry name" value="Actin-like ATPase domain"/>
    <property type="match status" value="2"/>
</dbReference>
<feature type="chain" id="PRO_0000064808" description="Type III pantothenate kinase">
    <location>
        <begin position="1"/>
        <end position="267"/>
    </location>
</feature>
<feature type="active site" description="Proton acceptor" evidence="1">
    <location>
        <position position="105"/>
    </location>
</feature>
<feature type="binding site" evidence="1">
    <location>
        <begin position="6"/>
        <end position="13"/>
    </location>
    <ligand>
        <name>ATP</name>
        <dbReference type="ChEBI" id="CHEBI:30616"/>
    </ligand>
</feature>
<feature type="binding site" evidence="1">
    <location>
        <position position="96"/>
    </location>
    <ligand>
        <name>substrate</name>
    </ligand>
</feature>
<feature type="binding site" evidence="1">
    <location>
        <begin position="103"/>
        <end position="106"/>
    </location>
    <ligand>
        <name>substrate</name>
    </ligand>
</feature>
<feature type="binding site" evidence="1">
    <location>
        <position position="131"/>
    </location>
    <ligand>
        <name>ATP</name>
        <dbReference type="ChEBI" id="CHEBI:30616"/>
    </ligand>
</feature>
<feature type="binding site" evidence="1">
    <location>
        <position position="181"/>
    </location>
    <ligand>
        <name>substrate</name>
    </ligand>
</feature>
<keyword id="KW-0067">ATP-binding</keyword>
<keyword id="KW-0173">Coenzyme A biosynthesis</keyword>
<keyword id="KW-0963">Cytoplasm</keyword>
<keyword id="KW-0418">Kinase</keyword>
<keyword id="KW-0547">Nucleotide-binding</keyword>
<keyword id="KW-0630">Potassium</keyword>
<keyword id="KW-0808">Transferase</keyword>
<comment type="function">
    <text evidence="1">Catalyzes the phosphorylation of pantothenate (Pan), the first step in CoA biosynthesis.</text>
</comment>
<comment type="catalytic activity">
    <reaction evidence="1">
        <text>(R)-pantothenate + ATP = (R)-4'-phosphopantothenate + ADP + H(+)</text>
        <dbReference type="Rhea" id="RHEA:16373"/>
        <dbReference type="ChEBI" id="CHEBI:10986"/>
        <dbReference type="ChEBI" id="CHEBI:15378"/>
        <dbReference type="ChEBI" id="CHEBI:29032"/>
        <dbReference type="ChEBI" id="CHEBI:30616"/>
        <dbReference type="ChEBI" id="CHEBI:456216"/>
        <dbReference type="EC" id="2.7.1.33"/>
    </reaction>
</comment>
<comment type="cofactor">
    <cofactor evidence="1">
        <name>NH4(+)</name>
        <dbReference type="ChEBI" id="CHEBI:28938"/>
    </cofactor>
    <cofactor evidence="1">
        <name>K(+)</name>
        <dbReference type="ChEBI" id="CHEBI:29103"/>
    </cofactor>
    <text evidence="1">A monovalent cation. Ammonium or potassium.</text>
</comment>
<comment type="pathway">
    <text evidence="1">Cofactor biosynthesis; coenzyme A biosynthesis; CoA from (R)-pantothenate: step 1/5.</text>
</comment>
<comment type="subunit">
    <text evidence="1">Homodimer.</text>
</comment>
<comment type="subcellular location">
    <subcellularLocation>
        <location evidence="1">Cytoplasm</location>
    </subcellularLocation>
</comment>
<comment type="similarity">
    <text evidence="1">Belongs to the type III pantothenate kinase family.</text>
</comment>
<sequence>MIILIDSGNSRLKVGWFDPDAPQAAREPAPVAFDNLDLDALGRWLATLPRRPQRALGVNVAGLARGQAIAATLRAGGCDIRWLRAQPLAMGLRNGYRNPDQLGADRWACMVGVLARQPSVHPPLLVASFGTATTLDTIGPDNVFPGGLILPGPAMMRGALAHGTAHLPLADGLVADYPIDTHQAIASGIAAAQAGAIVRQWLAGRQRYGQAPEIYVAGGGWPEVRQEAERLLAVTGAAFGATPRPTYLDSPVLDGLAALAAHGAPTA</sequence>
<name>COAX_BORBR</name>
<organism>
    <name type="scientific">Bordetella bronchiseptica (strain ATCC BAA-588 / NCTC 13252 / RB50)</name>
    <name type="common">Alcaligenes bronchisepticus</name>
    <dbReference type="NCBI Taxonomy" id="257310"/>
    <lineage>
        <taxon>Bacteria</taxon>
        <taxon>Pseudomonadati</taxon>
        <taxon>Pseudomonadota</taxon>
        <taxon>Betaproteobacteria</taxon>
        <taxon>Burkholderiales</taxon>
        <taxon>Alcaligenaceae</taxon>
        <taxon>Bordetella</taxon>
    </lineage>
</organism>